<name>ORYR_ASPOR</name>
<organism>
    <name type="scientific">Aspergillus oryzae (strain ATCC 42149 / RIB 40)</name>
    <name type="common">Yellow koji mold</name>
    <dbReference type="NCBI Taxonomy" id="510516"/>
    <lineage>
        <taxon>Eukaryota</taxon>
        <taxon>Fungi</taxon>
        <taxon>Dikarya</taxon>
        <taxon>Ascomycota</taxon>
        <taxon>Pezizomycotina</taxon>
        <taxon>Eurotiomycetes</taxon>
        <taxon>Eurotiomycetidae</taxon>
        <taxon>Eurotiales</taxon>
        <taxon>Aspergillaceae</taxon>
        <taxon>Aspergillus</taxon>
        <taxon>Aspergillus subgen. Circumdati</taxon>
    </lineage>
</organism>
<evidence type="ECO:0000269" key="1">
    <source>
    </source>
</evidence>
<evidence type="ECO:0000303" key="2">
    <source>
    </source>
</evidence>
<evidence type="ECO:0000305" key="3"/>
<evidence type="ECO:0000305" key="4">
    <source>
    </source>
</evidence>
<proteinExistence type="inferred from homology"/>
<feature type="chain" id="PRO_0000450493" description="2-methylcitrate dehydratase-like protein oryR">
    <location>
        <begin position="1"/>
        <end position="496"/>
    </location>
</feature>
<dbReference type="EC" id="4.2.1.-" evidence="4"/>
<dbReference type="EMBL" id="BA000056">
    <property type="protein sequence ID" value="BAE66059.1"/>
    <property type="molecule type" value="Genomic_DNA"/>
</dbReference>
<dbReference type="RefSeq" id="XP_001827192.1">
    <property type="nucleotide sequence ID" value="XM_001827140.1"/>
</dbReference>
<dbReference type="SMR" id="Q2TXG4"/>
<dbReference type="STRING" id="510516.Q2TXG4"/>
<dbReference type="EnsemblFungi" id="BAE66059">
    <property type="protein sequence ID" value="BAE66059"/>
    <property type="gene ID" value="AO090010000155"/>
</dbReference>
<dbReference type="GeneID" id="5999326"/>
<dbReference type="KEGG" id="aor:AO090010000155"/>
<dbReference type="HOGENOM" id="CLU_021803_1_0_1"/>
<dbReference type="OMA" id="RDHCLRY"/>
<dbReference type="OrthoDB" id="95273at5052"/>
<dbReference type="Proteomes" id="UP000006564">
    <property type="component" value="Chromosome 8"/>
</dbReference>
<dbReference type="GO" id="GO:0005739">
    <property type="term" value="C:mitochondrion"/>
    <property type="evidence" value="ECO:0007669"/>
    <property type="project" value="TreeGrafter"/>
</dbReference>
<dbReference type="GO" id="GO:0051537">
    <property type="term" value="F:2 iron, 2 sulfur cluster binding"/>
    <property type="evidence" value="ECO:0007669"/>
    <property type="project" value="InterPro"/>
</dbReference>
<dbReference type="GO" id="GO:0047547">
    <property type="term" value="F:2-methylcitrate dehydratase activity"/>
    <property type="evidence" value="ECO:0007669"/>
    <property type="project" value="InterPro"/>
</dbReference>
<dbReference type="GO" id="GO:0019679">
    <property type="term" value="P:propionate metabolic process, methylcitrate cycle"/>
    <property type="evidence" value="ECO:0007669"/>
    <property type="project" value="InterPro"/>
</dbReference>
<dbReference type="Gene3D" id="1.10.4100.10">
    <property type="entry name" value="2-methylcitrate dehydratase PrpD"/>
    <property type="match status" value="1"/>
</dbReference>
<dbReference type="Gene3D" id="3.30.1330.120">
    <property type="entry name" value="2-methylcitrate dehydratase PrpD"/>
    <property type="match status" value="1"/>
</dbReference>
<dbReference type="InterPro" id="IPR012705">
    <property type="entry name" value="2Me_IsoCit_deHydtase_PrpD"/>
</dbReference>
<dbReference type="InterPro" id="IPR036148">
    <property type="entry name" value="MmgE/PrpD_sf"/>
</dbReference>
<dbReference type="InterPro" id="IPR042183">
    <property type="entry name" value="MmgE/PrpD_sf_1"/>
</dbReference>
<dbReference type="InterPro" id="IPR042188">
    <property type="entry name" value="MmgE/PrpD_sf_2"/>
</dbReference>
<dbReference type="InterPro" id="IPR005656">
    <property type="entry name" value="MmgE_PrpD"/>
</dbReference>
<dbReference type="InterPro" id="IPR045337">
    <property type="entry name" value="MmgE_PrpD_C"/>
</dbReference>
<dbReference type="InterPro" id="IPR045336">
    <property type="entry name" value="MmgE_PrpD_N"/>
</dbReference>
<dbReference type="NCBIfam" id="TIGR02330">
    <property type="entry name" value="prpD"/>
    <property type="match status" value="1"/>
</dbReference>
<dbReference type="PANTHER" id="PTHR16943">
    <property type="entry name" value="2-METHYLCITRATE DEHYDRATASE-RELATED"/>
    <property type="match status" value="1"/>
</dbReference>
<dbReference type="PANTHER" id="PTHR16943:SF15">
    <property type="entry name" value="DEHYDRATASE (PRPD), PUTATIVE-RELATED"/>
    <property type="match status" value="1"/>
</dbReference>
<dbReference type="Pfam" id="PF19305">
    <property type="entry name" value="MmgE_PrpD_C"/>
    <property type="match status" value="1"/>
</dbReference>
<dbReference type="Pfam" id="PF03972">
    <property type="entry name" value="MmgE_PrpD_N"/>
    <property type="match status" value="1"/>
</dbReference>
<dbReference type="SUPFAM" id="SSF103378">
    <property type="entry name" value="2-methylcitrate dehydratase PrpD"/>
    <property type="match status" value="1"/>
</dbReference>
<reference key="1">
    <citation type="journal article" date="2005" name="Nature">
        <title>Genome sequencing and analysis of Aspergillus oryzae.</title>
        <authorList>
            <person name="Machida M."/>
            <person name="Asai K."/>
            <person name="Sano M."/>
            <person name="Tanaka T."/>
            <person name="Kumagai T."/>
            <person name="Terai G."/>
            <person name="Kusumoto K."/>
            <person name="Arima T."/>
            <person name="Akita O."/>
            <person name="Kashiwagi Y."/>
            <person name="Abe K."/>
            <person name="Gomi K."/>
            <person name="Horiuchi H."/>
            <person name="Kitamoto K."/>
            <person name="Kobayashi T."/>
            <person name="Takeuchi M."/>
            <person name="Denning D.W."/>
            <person name="Galagan J.E."/>
            <person name="Nierman W.C."/>
            <person name="Yu J."/>
            <person name="Archer D.B."/>
            <person name="Bennett J.W."/>
            <person name="Bhatnagar D."/>
            <person name="Cleveland T.E."/>
            <person name="Fedorova N.D."/>
            <person name="Gotoh O."/>
            <person name="Horikawa H."/>
            <person name="Hosoyama A."/>
            <person name="Ichinomiya M."/>
            <person name="Igarashi R."/>
            <person name="Iwashita K."/>
            <person name="Juvvadi P.R."/>
            <person name="Kato M."/>
            <person name="Kato Y."/>
            <person name="Kin T."/>
            <person name="Kokubun A."/>
            <person name="Maeda H."/>
            <person name="Maeyama N."/>
            <person name="Maruyama J."/>
            <person name="Nagasaki H."/>
            <person name="Nakajima T."/>
            <person name="Oda K."/>
            <person name="Okada K."/>
            <person name="Paulsen I."/>
            <person name="Sakamoto K."/>
            <person name="Sawano T."/>
            <person name="Takahashi M."/>
            <person name="Takase K."/>
            <person name="Terabayashi Y."/>
            <person name="Wortman J.R."/>
            <person name="Yamada O."/>
            <person name="Yamagata Y."/>
            <person name="Anazawa H."/>
            <person name="Hata Y."/>
            <person name="Koide Y."/>
            <person name="Komori T."/>
            <person name="Koyama Y."/>
            <person name="Minetoki T."/>
            <person name="Suharnan S."/>
            <person name="Tanaka A."/>
            <person name="Isono K."/>
            <person name="Kuhara S."/>
            <person name="Ogasawara N."/>
            <person name="Kikuchi H."/>
        </authorList>
    </citation>
    <scope>NUCLEOTIDE SEQUENCE [LARGE SCALE GENOMIC DNA]</scope>
    <source>
        <strain>ATCC 42149 / RIB 40</strain>
    </source>
</reference>
<reference key="2">
    <citation type="journal article" date="2018" name="J. Fungi">
        <title>Oryzines A &amp; B, maleidride congeners from Aspergillus oryzae and their putative biosynthesis.</title>
        <authorList>
            <person name="Wasil Z."/>
            <person name="Kuhnert E."/>
            <person name="Simpson T.J."/>
            <person name="Cox R.J."/>
        </authorList>
    </citation>
    <scope>FUNCTION</scope>
    <scope>PATHWAY</scope>
</reference>
<keyword id="KW-0456">Lyase</keyword>
<keyword id="KW-1185">Reference proteome</keyword>
<comment type="function">
    <text evidence="1 4">2-methylcitrate dehydratase-like protein; part of the gene cluster that mediates the biosynthesis of oryzines, natural products with an unusual maleidride backbone (PubMed:30104550). The two subunits of the fungal fatty acid synthase oryfasA and oryfasB probably form octenoic acid (Probable). This fatty acid is most likely activated by the acyl-CoA ligase oryP to give octenyl-CoA before the citrate synthase-like protein oryE catalyzes condensation with oxaloacetate to form tricarboxylic acid (Probable). The next steps of the pathways are conjectural, but a favorite possible route has been proposed, beginning with decarboxylation and concomitant dehydration by the decarboxylase oryM, followed by tautomerization, which may lead to the production of a diene intermediate (Probable). Reduction of this diene intermediate could give the known metabolite piliformic acid (Probable). On the pathway to oryzine B and oryzine A, however, hydroxylation of the diene by the alpha-ketoglutarate-dependent dioxygenase oryG and lactonisation by the lactonohydrolases oryH or oryL could give oryzine B directly (Probable). Finally, enoyl reduction by the dehydrogenase oryD would then convert oryzine B into oryzine A (Probable).</text>
</comment>
<comment type="pathway">
    <text evidence="4">Secondary metabolite biosynthesis.</text>
</comment>
<comment type="similarity">
    <text evidence="3">Belongs to the PrpD family.</text>
</comment>
<protein>
    <recommendedName>
        <fullName evidence="2">2-methylcitrate dehydratase-like protein oryR</fullName>
        <ecNumber evidence="4">4.2.1.-</ecNumber>
    </recommendedName>
    <alternativeName>
        <fullName evidence="2">Oryzines biosynthesis cluster protein R</fullName>
    </alternativeName>
</protein>
<sequence length="496" mass="54434">MTIPAADDNNCPSYDKVIDLIVDYAYDYEIDSPAAWTRAKAALIDALGAAIESIHTSPECAAMIGPVWPQTATVPGGFRLPGTQFQVDALKGAFDLGGMIRYLDHNDAFPGAEWGHPSDNLGAILSTADILSREALARGSPEEVISMKQVLTALIKAYEIQGVFQIRNAFNKVGLDHVILVKVASSAMVSWLMGLSRDQARAVVSHAWADGHPLRVYRQAPNAGPRKGWAAGDACMRAVHLANLVRCGQPGIRSAITTPRWGFYDVLYRGQTFELPRPFTSWVMETVLFKVSTAEGHGLTAVEAALTIAEKLAQRGLRPEEDIVNIRARTQEAGMIIINKKGPLHNAADRDHCLRYMVAVVLLKGSQITTADYQDSSPWARDPRVETLRSITTMEEDPSFTRDYHDPQCRSVANALEVTLRDGTKLEELVPFPLGHVRRPETLQLVREKAQQNLGLKLSSERVGQILDTVDQPKFEKMAASDFVDLFIPQPASSAA</sequence>
<accession>Q2TXG4</accession>
<gene>
    <name evidence="2" type="primary">oryR</name>
    <name type="ORF">AO090010000155</name>
</gene>